<evidence type="ECO:0000255" key="1">
    <source>
        <dbReference type="HAMAP-Rule" id="MF_01331"/>
    </source>
</evidence>
<evidence type="ECO:0000305" key="2"/>
<gene>
    <name evidence="1" type="primary">rplV</name>
    <name type="ordered locus">Cla_0064</name>
</gene>
<keyword id="KW-1185">Reference proteome</keyword>
<keyword id="KW-0687">Ribonucleoprotein</keyword>
<keyword id="KW-0689">Ribosomal protein</keyword>
<keyword id="KW-0694">RNA-binding</keyword>
<keyword id="KW-0699">rRNA-binding</keyword>
<sequence>MSRALIKFIRLSPTKARLIAREVQGMNAELALASLKFMPNKGAKFIANAISSAVANGGFEANEVIVSSCRVDAGAVLKRFRPRARGSASRIRKPTSHILVEVSKAEVSAEKTTKAKKASVKKES</sequence>
<proteinExistence type="inferred from homology"/>
<comment type="function">
    <text evidence="1">This protein binds specifically to 23S rRNA; its binding is stimulated by other ribosomal proteins, e.g. L4, L17, and L20. It is important during the early stages of 50S assembly. It makes multiple contacts with different domains of the 23S rRNA in the assembled 50S subunit and ribosome (By similarity).</text>
</comment>
<comment type="function">
    <text evidence="1">The globular domain of the protein is located near the polypeptide exit tunnel on the outside of the subunit, while an extended beta-hairpin is found that lines the wall of the exit tunnel in the center of the 70S ribosome.</text>
</comment>
<comment type="subunit">
    <text evidence="1">Part of the 50S ribosomal subunit.</text>
</comment>
<comment type="similarity">
    <text evidence="1">Belongs to the universal ribosomal protein uL22 family.</text>
</comment>
<accession>B9KEE5</accession>
<dbReference type="EMBL" id="CP000932">
    <property type="protein sequence ID" value="ACM63430.1"/>
    <property type="molecule type" value="Genomic_DNA"/>
</dbReference>
<dbReference type="RefSeq" id="WP_012660816.1">
    <property type="nucleotide sequence ID" value="NC_012039.1"/>
</dbReference>
<dbReference type="SMR" id="B9KEE5"/>
<dbReference type="STRING" id="306263.Cla_0064"/>
<dbReference type="KEGG" id="cla:CLA_0064"/>
<dbReference type="PATRIC" id="fig|306263.5.peg.63"/>
<dbReference type="eggNOG" id="COG0091">
    <property type="taxonomic scope" value="Bacteria"/>
</dbReference>
<dbReference type="HOGENOM" id="CLU_083987_3_2_7"/>
<dbReference type="Proteomes" id="UP000007727">
    <property type="component" value="Chromosome"/>
</dbReference>
<dbReference type="GO" id="GO:0022625">
    <property type="term" value="C:cytosolic large ribosomal subunit"/>
    <property type="evidence" value="ECO:0007669"/>
    <property type="project" value="TreeGrafter"/>
</dbReference>
<dbReference type="GO" id="GO:0019843">
    <property type="term" value="F:rRNA binding"/>
    <property type="evidence" value="ECO:0007669"/>
    <property type="project" value="UniProtKB-UniRule"/>
</dbReference>
<dbReference type="GO" id="GO:0003735">
    <property type="term" value="F:structural constituent of ribosome"/>
    <property type="evidence" value="ECO:0007669"/>
    <property type="project" value="InterPro"/>
</dbReference>
<dbReference type="GO" id="GO:0006412">
    <property type="term" value="P:translation"/>
    <property type="evidence" value="ECO:0007669"/>
    <property type="project" value="UniProtKB-UniRule"/>
</dbReference>
<dbReference type="CDD" id="cd00336">
    <property type="entry name" value="Ribosomal_L22"/>
    <property type="match status" value="1"/>
</dbReference>
<dbReference type="Gene3D" id="3.90.470.10">
    <property type="entry name" value="Ribosomal protein L22/L17"/>
    <property type="match status" value="1"/>
</dbReference>
<dbReference type="HAMAP" id="MF_01331_B">
    <property type="entry name" value="Ribosomal_uL22_B"/>
    <property type="match status" value="1"/>
</dbReference>
<dbReference type="InterPro" id="IPR001063">
    <property type="entry name" value="Ribosomal_uL22"/>
</dbReference>
<dbReference type="InterPro" id="IPR005727">
    <property type="entry name" value="Ribosomal_uL22_bac/chlpt-type"/>
</dbReference>
<dbReference type="InterPro" id="IPR047867">
    <property type="entry name" value="Ribosomal_uL22_bac/org-type"/>
</dbReference>
<dbReference type="InterPro" id="IPR018260">
    <property type="entry name" value="Ribosomal_uL22_CS"/>
</dbReference>
<dbReference type="InterPro" id="IPR036394">
    <property type="entry name" value="Ribosomal_uL22_sf"/>
</dbReference>
<dbReference type="NCBIfam" id="TIGR01044">
    <property type="entry name" value="rplV_bact"/>
    <property type="match status" value="1"/>
</dbReference>
<dbReference type="PANTHER" id="PTHR13501">
    <property type="entry name" value="CHLOROPLAST 50S RIBOSOMAL PROTEIN L22-RELATED"/>
    <property type="match status" value="1"/>
</dbReference>
<dbReference type="PANTHER" id="PTHR13501:SF8">
    <property type="entry name" value="LARGE RIBOSOMAL SUBUNIT PROTEIN UL22M"/>
    <property type="match status" value="1"/>
</dbReference>
<dbReference type="Pfam" id="PF00237">
    <property type="entry name" value="Ribosomal_L22"/>
    <property type="match status" value="1"/>
</dbReference>
<dbReference type="SUPFAM" id="SSF54843">
    <property type="entry name" value="Ribosomal protein L22"/>
    <property type="match status" value="1"/>
</dbReference>
<dbReference type="PROSITE" id="PS00464">
    <property type="entry name" value="RIBOSOMAL_L22"/>
    <property type="match status" value="1"/>
</dbReference>
<reference key="1">
    <citation type="journal article" date="2008" name="Foodborne Pathog. Dis.">
        <title>The complete genome sequence and analysis of the human pathogen Campylobacter lari.</title>
        <authorList>
            <person name="Miller W.G."/>
            <person name="Wang G."/>
            <person name="Binnewies T.T."/>
            <person name="Parker C.T."/>
        </authorList>
    </citation>
    <scope>NUCLEOTIDE SEQUENCE [LARGE SCALE GENOMIC DNA]</scope>
    <source>
        <strain>RM2100 / D67 / ATCC BAA-1060</strain>
    </source>
</reference>
<protein>
    <recommendedName>
        <fullName evidence="1">Large ribosomal subunit protein uL22</fullName>
    </recommendedName>
    <alternativeName>
        <fullName evidence="2">50S ribosomal protein L22</fullName>
    </alternativeName>
</protein>
<name>RL22_CAMLR</name>
<feature type="chain" id="PRO_1000166051" description="Large ribosomal subunit protein uL22">
    <location>
        <begin position="1"/>
        <end position="124"/>
    </location>
</feature>
<organism>
    <name type="scientific">Campylobacter lari (strain RM2100 / D67 / ATCC BAA-1060)</name>
    <dbReference type="NCBI Taxonomy" id="306263"/>
    <lineage>
        <taxon>Bacteria</taxon>
        <taxon>Pseudomonadati</taxon>
        <taxon>Campylobacterota</taxon>
        <taxon>Epsilonproteobacteria</taxon>
        <taxon>Campylobacterales</taxon>
        <taxon>Campylobacteraceae</taxon>
        <taxon>Campylobacter</taxon>
    </lineage>
</organism>